<sequence>MLYSIKMRAESGSRHISGAERIVERRDMAQAMDALTRRGMEHPNGPAEAVTVTVRPITRPLMHIQALPVHEPHVRDQHEARQVLTEELRGMALDPSPVLDLLYSLRKPMRGAVLLDVTGMKRLEPDPQRGVRATCMDYTGNRCEGKNHFREALCLASKVAHCPQIIGELCISDDPDYTTGYFASQVRGYVRIHHIKQAGQQLGGRIFLFRGQQAEIGQCVDYLENQPVMVVMESL</sequence>
<comment type="function">
    <text evidence="1">Catalyzes the transformation of pimelate into pimeloyl-CoA with concomitant hydrolysis of ATP to AMP.</text>
</comment>
<comment type="catalytic activity">
    <reaction evidence="1">
        <text>heptanedioate + ATP + CoA = 6-carboxyhexanoyl-CoA + AMP + diphosphate</text>
        <dbReference type="Rhea" id="RHEA:14781"/>
        <dbReference type="ChEBI" id="CHEBI:30616"/>
        <dbReference type="ChEBI" id="CHEBI:33019"/>
        <dbReference type="ChEBI" id="CHEBI:36165"/>
        <dbReference type="ChEBI" id="CHEBI:57287"/>
        <dbReference type="ChEBI" id="CHEBI:57360"/>
        <dbReference type="ChEBI" id="CHEBI:456215"/>
        <dbReference type="EC" id="6.2.1.14"/>
    </reaction>
</comment>
<comment type="cofactor">
    <cofactor evidence="1">
        <name>Mg(2+)</name>
        <dbReference type="ChEBI" id="CHEBI:18420"/>
    </cofactor>
</comment>
<comment type="pathway">
    <text evidence="1">Metabolic intermediate metabolism; pimeloyl-CoA biosynthesis; pimeloyl-CoA from pimelate: step 1/1.</text>
</comment>
<comment type="subunit">
    <text evidence="1">Homodimer.</text>
</comment>
<comment type="similarity">
    <text evidence="1">Belongs to the BioW family.</text>
</comment>
<reference key="1">
    <citation type="submission" date="2009-01" db="EMBL/GenBank/DDBJ databases">
        <title>Complete sequence of Desulfovibrio desulfuricans subsp. desulfuricans str. ATCC 27774.</title>
        <authorList>
            <consortium name="US DOE Joint Genome Institute"/>
            <person name="Lucas S."/>
            <person name="Copeland A."/>
            <person name="Lapidus A."/>
            <person name="Glavina del Rio T."/>
            <person name="Tice H."/>
            <person name="Bruce D."/>
            <person name="Goodwin L."/>
            <person name="Pitluck S."/>
            <person name="Sims D."/>
            <person name="Lu M."/>
            <person name="Kiss H."/>
            <person name="Meineke L."/>
            <person name="Brettin T."/>
            <person name="Detter J.C."/>
            <person name="Han C."/>
            <person name="Larimer F."/>
            <person name="Land M."/>
            <person name="Hauser L."/>
            <person name="Kyrpides N."/>
            <person name="Ovchinnikova G."/>
            <person name="Hazen T.C."/>
        </authorList>
    </citation>
    <scope>NUCLEOTIDE SEQUENCE [LARGE SCALE GENOMIC DNA]</scope>
    <source>
        <strain>ATCC 27774 / DSM 6949 / MB</strain>
    </source>
</reference>
<proteinExistence type="inferred from homology"/>
<gene>
    <name evidence="1" type="primary">bioW</name>
    <name type="ordered locus">Ddes_0424</name>
</gene>
<accession>B8J3V1</accession>
<keyword id="KW-0067">ATP-binding</keyword>
<keyword id="KW-0093">Biotin biosynthesis</keyword>
<keyword id="KW-0436">Ligase</keyword>
<keyword id="KW-0460">Magnesium</keyword>
<keyword id="KW-0547">Nucleotide-binding</keyword>
<evidence type="ECO:0000255" key="1">
    <source>
        <dbReference type="HAMAP-Rule" id="MF_00668"/>
    </source>
</evidence>
<dbReference type="EC" id="6.2.1.14" evidence="1"/>
<dbReference type="EMBL" id="CP001358">
    <property type="protein sequence ID" value="ACL48336.1"/>
    <property type="molecule type" value="Genomic_DNA"/>
</dbReference>
<dbReference type="SMR" id="B8J3V1"/>
<dbReference type="STRING" id="525146.Ddes_0424"/>
<dbReference type="KEGG" id="dds:Ddes_0424"/>
<dbReference type="eggNOG" id="COG1424">
    <property type="taxonomic scope" value="Bacteria"/>
</dbReference>
<dbReference type="HOGENOM" id="CLU_076858_0_0_7"/>
<dbReference type="UniPathway" id="UPA00999">
    <property type="reaction ID" value="UER00351"/>
</dbReference>
<dbReference type="GO" id="GO:0042410">
    <property type="term" value="F:6-carboxyhexanoate-CoA ligase activity"/>
    <property type="evidence" value="ECO:0007669"/>
    <property type="project" value="UniProtKB-UniRule"/>
</dbReference>
<dbReference type="GO" id="GO:0005524">
    <property type="term" value="F:ATP binding"/>
    <property type="evidence" value="ECO:0007669"/>
    <property type="project" value="UniProtKB-KW"/>
</dbReference>
<dbReference type="GO" id="GO:0000287">
    <property type="term" value="F:magnesium ion binding"/>
    <property type="evidence" value="ECO:0007669"/>
    <property type="project" value="UniProtKB-UniRule"/>
</dbReference>
<dbReference type="GO" id="GO:0009102">
    <property type="term" value="P:biotin biosynthetic process"/>
    <property type="evidence" value="ECO:0007669"/>
    <property type="project" value="UniProtKB-UniRule"/>
</dbReference>
<dbReference type="HAMAP" id="MF_00668">
    <property type="entry name" value="BioW"/>
    <property type="match status" value="1"/>
</dbReference>
<dbReference type="InterPro" id="IPR005499">
    <property type="entry name" value="BioW"/>
</dbReference>
<dbReference type="NCBIfam" id="NF002360">
    <property type="entry name" value="PRK01322.1"/>
    <property type="match status" value="1"/>
</dbReference>
<dbReference type="Pfam" id="PF03744">
    <property type="entry name" value="BioW"/>
    <property type="match status" value="1"/>
</dbReference>
<protein>
    <recommendedName>
        <fullName evidence="1">6-carboxyhexanoate--CoA ligase</fullName>
        <ecNumber evidence="1">6.2.1.14</ecNumber>
    </recommendedName>
    <alternativeName>
        <fullName evidence="1">Pimeloyl-CoA synthase</fullName>
    </alternativeName>
</protein>
<feature type="chain" id="PRO_0000412084" description="6-carboxyhexanoate--CoA ligase">
    <location>
        <begin position="1"/>
        <end position="235"/>
    </location>
</feature>
<organism>
    <name type="scientific">Desulfovibrio desulfuricans (strain ATCC 27774 / DSM 6949 / MB)</name>
    <dbReference type="NCBI Taxonomy" id="525146"/>
    <lineage>
        <taxon>Bacteria</taxon>
        <taxon>Pseudomonadati</taxon>
        <taxon>Thermodesulfobacteriota</taxon>
        <taxon>Desulfovibrionia</taxon>
        <taxon>Desulfovibrionales</taxon>
        <taxon>Desulfovibrionaceae</taxon>
        <taxon>Desulfovibrio</taxon>
    </lineage>
</organism>
<name>BIOW_DESDA</name>